<feature type="chain" id="PRO_0000314695" description="Putative thymidine phosphorylase 2">
    <location>
        <begin position="1"/>
        <end position="513"/>
    </location>
</feature>
<reference key="1">
    <citation type="submission" date="2006-12" db="EMBL/GenBank/DDBJ databases">
        <title>Complete sequence of chromosome 1 of Acidovorax sp. JS42.</title>
        <authorList>
            <person name="Copeland A."/>
            <person name="Lucas S."/>
            <person name="Lapidus A."/>
            <person name="Barry K."/>
            <person name="Detter J.C."/>
            <person name="Glavina del Rio T."/>
            <person name="Dalin E."/>
            <person name="Tice H."/>
            <person name="Pitluck S."/>
            <person name="Chertkov O."/>
            <person name="Brettin T."/>
            <person name="Bruce D."/>
            <person name="Han C."/>
            <person name="Tapia R."/>
            <person name="Gilna P."/>
            <person name="Schmutz J."/>
            <person name="Larimer F."/>
            <person name="Land M."/>
            <person name="Hauser L."/>
            <person name="Kyrpides N."/>
            <person name="Kim E."/>
            <person name="Stahl D."/>
            <person name="Richardson P."/>
        </authorList>
    </citation>
    <scope>NUCLEOTIDE SEQUENCE [LARGE SCALE GENOMIC DNA]</scope>
    <source>
        <strain>JS42</strain>
    </source>
</reference>
<evidence type="ECO:0000255" key="1">
    <source>
        <dbReference type="HAMAP-Rule" id="MF_00703"/>
    </source>
</evidence>
<keyword id="KW-0328">Glycosyltransferase</keyword>
<keyword id="KW-0808">Transferase</keyword>
<name>TYPH2_ACISJ</name>
<organism>
    <name type="scientific">Acidovorax sp. (strain JS42)</name>
    <dbReference type="NCBI Taxonomy" id="232721"/>
    <lineage>
        <taxon>Bacteria</taxon>
        <taxon>Pseudomonadati</taxon>
        <taxon>Pseudomonadota</taxon>
        <taxon>Betaproteobacteria</taxon>
        <taxon>Burkholderiales</taxon>
        <taxon>Comamonadaceae</taxon>
        <taxon>Acidovorax</taxon>
    </lineage>
</organism>
<accession>A1W9B0</accession>
<proteinExistence type="inferred from homology"/>
<comment type="catalytic activity">
    <reaction evidence="1">
        <text>thymidine + phosphate = 2-deoxy-alpha-D-ribose 1-phosphate + thymine</text>
        <dbReference type="Rhea" id="RHEA:16037"/>
        <dbReference type="ChEBI" id="CHEBI:17748"/>
        <dbReference type="ChEBI" id="CHEBI:17821"/>
        <dbReference type="ChEBI" id="CHEBI:43474"/>
        <dbReference type="ChEBI" id="CHEBI:57259"/>
        <dbReference type="EC" id="2.4.2.4"/>
    </reaction>
</comment>
<comment type="similarity">
    <text evidence="1">Belongs to the thymidine/pyrimidine-nucleoside phosphorylase family. Type 2 subfamily.</text>
</comment>
<protein>
    <recommendedName>
        <fullName evidence="1">Putative thymidine phosphorylase 2</fullName>
        <ecNumber evidence="1">2.4.2.4</ecNumber>
    </recommendedName>
    <alternativeName>
        <fullName evidence="1">TdRPase 2</fullName>
    </alternativeName>
</protein>
<dbReference type="EC" id="2.4.2.4" evidence="1"/>
<dbReference type="EMBL" id="CP000539">
    <property type="protein sequence ID" value="ABM42835.1"/>
    <property type="molecule type" value="Genomic_DNA"/>
</dbReference>
<dbReference type="SMR" id="A1W9B0"/>
<dbReference type="STRING" id="232721.Ajs_2690"/>
<dbReference type="KEGG" id="ajs:Ajs_2690"/>
<dbReference type="eggNOG" id="COG0213">
    <property type="taxonomic scope" value="Bacteria"/>
</dbReference>
<dbReference type="HOGENOM" id="CLU_025040_6_0_4"/>
<dbReference type="Proteomes" id="UP000000645">
    <property type="component" value="Chromosome"/>
</dbReference>
<dbReference type="GO" id="GO:0005829">
    <property type="term" value="C:cytosol"/>
    <property type="evidence" value="ECO:0007669"/>
    <property type="project" value="TreeGrafter"/>
</dbReference>
<dbReference type="GO" id="GO:0004645">
    <property type="term" value="F:1,4-alpha-oligoglucan phosphorylase activity"/>
    <property type="evidence" value="ECO:0007669"/>
    <property type="project" value="InterPro"/>
</dbReference>
<dbReference type="GO" id="GO:0009032">
    <property type="term" value="F:thymidine phosphorylase activity"/>
    <property type="evidence" value="ECO:0007669"/>
    <property type="project" value="UniProtKB-UniRule"/>
</dbReference>
<dbReference type="GO" id="GO:0006206">
    <property type="term" value="P:pyrimidine nucleobase metabolic process"/>
    <property type="evidence" value="ECO:0007669"/>
    <property type="project" value="InterPro"/>
</dbReference>
<dbReference type="GO" id="GO:0006213">
    <property type="term" value="P:pyrimidine nucleoside metabolic process"/>
    <property type="evidence" value="ECO:0007669"/>
    <property type="project" value="InterPro"/>
</dbReference>
<dbReference type="Gene3D" id="1.20.970.50">
    <property type="match status" value="1"/>
</dbReference>
<dbReference type="Gene3D" id="3.40.1030.10">
    <property type="entry name" value="Nucleoside phosphorylase/phosphoribosyltransferase catalytic domain"/>
    <property type="match status" value="1"/>
</dbReference>
<dbReference type="Gene3D" id="3.90.1170.30">
    <property type="entry name" value="Pyrimidine nucleoside phosphorylase-like, C-terminal domain"/>
    <property type="match status" value="1"/>
</dbReference>
<dbReference type="HAMAP" id="MF_00703">
    <property type="entry name" value="Thymid_phosp_2"/>
    <property type="match status" value="1"/>
</dbReference>
<dbReference type="InterPro" id="IPR000312">
    <property type="entry name" value="Glycosyl_Trfase_fam3"/>
</dbReference>
<dbReference type="InterPro" id="IPR017459">
    <property type="entry name" value="Glycosyl_Trfase_fam3_N_dom"/>
</dbReference>
<dbReference type="InterPro" id="IPR036320">
    <property type="entry name" value="Glycosyl_Trfase_fam3_N_dom_sf"/>
</dbReference>
<dbReference type="InterPro" id="IPR035902">
    <property type="entry name" value="Nuc_phospho_transferase"/>
</dbReference>
<dbReference type="InterPro" id="IPR036566">
    <property type="entry name" value="PYNP-like_C_sf"/>
</dbReference>
<dbReference type="InterPro" id="IPR013102">
    <property type="entry name" value="PYNP_C"/>
</dbReference>
<dbReference type="InterPro" id="IPR017872">
    <property type="entry name" value="Pyrmidine_PPase_CS"/>
</dbReference>
<dbReference type="InterPro" id="IPR028579">
    <property type="entry name" value="Thym_Pase_Put"/>
</dbReference>
<dbReference type="InterPro" id="IPR013466">
    <property type="entry name" value="Thymidine/AMP_Pase"/>
</dbReference>
<dbReference type="InterPro" id="IPR000053">
    <property type="entry name" value="Thymidine/pyrmidine_PPase"/>
</dbReference>
<dbReference type="NCBIfam" id="TIGR02645">
    <property type="entry name" value="ARCH_P_rylase"/>
    <property type="match status" value="1"/>
</dbReference>
<dbReference type="NCBIfam" id="NF003338">
    <property type="entry name" value="PRK04350.1"/>
    <property type="match status" value="1"/>
</dbReference>
<dbReference type="PANTHER" id="PTHR10515">
    <property type="entry name" value="THYMIDINE PHOSPHORYLASE"/>
    <property type="match status" value="1"/>
</dbReference>
<dbReference type="PANTHER" id="PTHR10515:SF0">
    <property type="entry name" value="THYMIDINE PHOSPHORYLASE"/>
    <property type="match status" value="1"/>
</dbReference>
<dbReference type="Pfam" id="PF02885">
    <property type="entry name" value="Glycos_trans_3N"/>
    <property type="match status" value="1"/>
</dbReference>
<dbReference type="Pfam" id="PF00591">
    <property type="entry name" value="Glycos_transf_3"/>
    <property type="match status" value="1"/>
</dbReference>
<dbReference type="Pfam" id="PF07831">
    <property type="entry name" value="PYNP_C"/>
    <property type="match status" value="1"/>
</dbReference>
<dbReference type="SMART" id="SM00941">
    <property type="entry name" value="PYNP_C"/>
    <property type="match status" value="1"/>
</dbReference>
<dbReference type="SUPFAM" id="SSF52418">
    <property type="entry name" value="Nucleoside phosphorylase/phosphoribosyltransferase catalytic domain"/>
    <property type="match status" value="1"/>
</dbReference>
<dbReference type="SUPFAM" id="SSF47648">
    <property type="entry name" value="Nucleoside phosphorylase/phosphoribosyltransferase N-terminal domain"/>
    <property type="match status" value="1"/>
</dbReference>
<dbReference type="SUPFAM" id="SSF54680">
    <property type="entry name" value="Pyrimidine nucleoside phosphorylase C-terminal domain"/>
    <property type="match status" value="1"/>
</dbReference>
<dbReference type="PROSITE" id="PS00647">
    <property type="entry name" value="THYMID_PHOSPHORYLASE"/>
    <property type="match status" value="1"/>
</dbReference>
<gene>
    <name type="ordered locus">Ajs_2690</name>
</gene>
<sequence length="513" mass="53719">MTAQMHEAGRTKEAGNRLQAWRTGIDTYQEPVVYMRRDCPVCRSEGFTTQARVQLTAGGRSIVATLSVVDGDWLAENVAGLSESAWASLGAQPGEPVAVTHAPPLDSLSHVRAKVYGNSLGDAQFGAIISDVAAGRYSDLHLATFITACAGDRLDLAETLSLTKAMIAVGDRIDWGRPLVVDKHCVGGLPGNRTTLLVVPIVTACGLMMPKTSSRAITSPAGTADTMEVLAPVNLDVPSMRRVVERTGGCIVWGGSVRLSPADDILIRVERPLDLDSEGQLVASVLSKKAAAGSTHVLIDLPVGATAKVRSAHAAASLGRRLQEVGGAIGLQVFLRVTDGEQPVGRGIGPALEARDVLAVLQGTREAPADLRERALRLAADILEMGGAAPAGGGLKLATEVLADGRAWAKFQAICSEQGGLRSLPMAAHLHTVESPGTGRVTRIDNRLLARAAKLAGAPTAPAAGIDVHARLGDRVEAGQPLFTLHAQAPGELAYALEFVRARPPIFQISENV</sequence>